<gene>
    <name type="ordered locus">Tcr_1902</name>
</gene>
<accession>Q31ED1</accession>
<feature type="chain" id="PRO_0000261985" description="Nucleotide-binding protein Tcr_1902">
    <location>
        <begin position="1"/>
        <end position="161"/>
    </location>
</feature>
<dbReference type="EMBL" id="CP000109">
    <property type="protein sequence ID" value="ABB42492.1"/>
    <property type="molecule type" value="Genomic_DNA"/>
</dbReference>
<dbReference type="SMR" id="Q31ED1"/>
<dbReference type="STRING" id="317025.Tcr_1902"/>
<dbReference type="KEGG" id="tcx:Tcr_1902"/>
<dbReference type="eggNOG" id="COG1666">
    <property type="taxonomic scope" value="Bacteria"/>
</dbReference>
<dbReference type="HOGENOM" id="CLU_099839_1_0_6"/>
<dbReference type="OrthoDB" id="9801447at2"/>
<dbReference type="GO" id="GO:0005829">
    <property type="term" value="C:cytosol"/>
    <property type="evidence" value="ECO:0007669"/>
    <property type="project" value="TreeGrafter"/>
</dbReference>
<dbReference type="GO" id="GO:0000166">
    <property type="term" value="F:nucleotide binding"/>
    <property type="evidence" value="ECO:0007669"/>
    <property type="project" value="TreeGrafter"/>
</dbReference>
<dbReference type="CDD" id="cd11740">
    <property type="entry name" value="YajQ_like"/>
    <property type="match status" value="1"/>
</dbReference>
<dbReference type="Gene3D" id="3.30.70.860">
    <property type="match status" value="1"/>
</dbReference>
<dbReference type="Gene3D" id="3.30.70.990">
    <property type="entry name" value="YajQ-like, domain 2"/>
    <property type="match status" value="1"/>
</dbReference>
<dbReference type="HAMAP" id="MF_00632">
    <property type="entry name" value="YajQ"/>
    <property type="match status" value="1"/>
</dbReference>
<dbReference type="InterPro" id="IPR007551">
    <property type="entry name" value="DUF520"/>
</dbReference>
<dbReference type="InterPro" id="IPR035571">
    <property type="entry name" value="UPF0234-like_C"/>
</dbReference>
<dbReference type="InterPro" id="IPR035570">
    <property type="entry name" value="UPF0234_N"/>
</dbReference>
<dbReference type="InterPro" id="IPR036183">
    <property type="entry name" value="YajQ-like_sf"/>
</dbReference>
<dbReference type="NCBIfam" id="NF003819">
    <property type="entry name" value="PRK05412.1"/>
    <property type="match status" value="1"/>
</dbReference>
<dbReference type="PANTHER" id="PTHR30476">
    <property type="entry name" value="UPF0234 PROTEIN YAJQ"/>
    <property type="match status" value="1"/>
</dbReference>
<dbReference type="PANTHER" id="PTHR30476:SF0">
    <property type="entry name" value="UPF0234 PROTEIN YAJQ"/>
    <property type="match status" value="1"/>
</dbReference>
<dbReference type="Pfam" id="PF04461">
    <property type="entry name" value="DUF520"/>
    <property type="match status" value="1"/>
</dbReference>
<dbReference type="SUPFAM" id="SSF89963">
    <property type="entry name" value="YajQ-like"/>
    <property type="match status" value="2"/>
</dbReference>
<evidence type="ECO:0000255" key="1">
    <source>
        <dbReference type="HAMAP-Rule" id="MF_00632"/>
    </source>
</evidence>
<sequence length="161" mass="18448">MPSFDIVSELDQHELTNAVDQANKEVTTRYDFKGTDSSFELKESMVTLKTESEFQLQQMLNILIEKANRRGIDVKCMEVKDPEIQLKTAKQVVEMKEGLDAPLAKKIIKAIKESKIKVQAAKQEDTIRVTGKKRDDLQAVMQLLKGMEDLDMPLQFNNFRD</sequence>
<protein>
    <recommendedName>
        <fullName evidence="1">Nucleotide-binding protein Tcr_1902</fullName>
    </recommendedName>
</protein>
<name>Y1902_HYDCU</name>
<proteinExistence type="inferred from homology"/>
<comment type="function">
    <text evidence="1">Nucleotide-binding protein.</text>
</comment>
<comment type="similarity">
    <text evidence="1">Belongs to the YajQ family.</text>
</comment>
<keyword id="KW-0547">Nucleotide-binding</keyword>
<organism>
    <name type="scientific">Hydrogenovibrio crunogenus (strain DSM 25203 / XCL-2)</name>
    <name type="common">Thiomicrospira crunogena</name>
    <dbReference type="NCBI Taxonomy" id="317025"/>
    <lineage>
        <taxon>Bacteria</taxon>
        <taxon>Pseudomonadati</taxon>
        <taxon>Pseudomonadota</taxon>
        <taxon>Gammaproteobacteria</taxon>
        <taxon>Thiotrichales</taxon>
        <taxon>Piscirickettsiaceae</taxon>
        <taxon>Hydrogenovibrio</taxon>
    </lineage>
</organism>
<reference key="1">
    <citation type="journal article" date="2006" name="PLoS Biol.">
        <title>The genome of deep-sea vent chemolithoautotroph Thiomicrospira crunogena XCL-2.</title>
        <authorList>
            <person name="Scott K.M."/>
            <person name="Sievert S.M."/>
            <person name="Abril F.N."/>
            <person name="Ball L.A."/>
            <person name="Barrett C.J."/>
            <person name="Blake R.A."/>
            <person name="Boller A.J."/>
            <person name="Chain P.S.G."/>
            <person name="Clark J.A."/>
            <person name="Davis C.R."/>
            <person name="Detter C."/>
            <person name="Do K.F."/>
            <person name="Dobrinski K.P."/>
            <person name="Faza B.I."/>
            <person name="Fitzpatrick K.A."/>
            <person name="Freyermuth S.K."/>
            <person name="Harmer T.L."/>
            <person name="Hauser L.J."/>
            <person name="Huegler M."/>
            <person name="Kerfeld C.A."/>
            <person name="Klotz M.G."/>
            <person name="Kong W.W."/>
            <person name="Land M."/>
            <person name="Lapidus A."/>
            <person name="Larimer F.W."/>
            <person name="Longo D.L."/>
            <person name="Lucas S."/>
            <person name="Malfatti S.A."/>
            <person name="Massey S.E."/>
            <person name="Martin D.D."/>
            <person name="McCuddin Z."/>
            <person name="Meyer F."/>
            <person name="Moore J.L."/>
            <person name="Ocampo L.H. Jr."/>
            <person name="Paul J.H."/>
            <person name="Paulsen I.T."/>
            <person name="Reep D.K."/>
            <person name="Ren Q."/>
            <person name="Ross R.L."/>
            <person name="Sato P.Y."/>
            <person name="Thomas P."/>
            <person name="Tinkham L.E."/>
            <person name="Zeruth G.T."/>
        </authorList>
    </citation>
    <scope>NUCLEOTIDE SEQUENCE [LARGE SCALE GENOMIC DNA]</scope>
    <source>
        <strain>DSM 25203 / XCL-2</strain>
    </source>
</reference>